<keyword id="KW-1003">Cell membrane</keyword>
<keyword id="KW-0350">Heme biosynthesis</keyword>
<keyword id="KW-0472">Membrane</keyword>
<keyword id="KW-0808">Transferase</keyword>
<keyword id="KW-0812">Transmembrane</keyword>
<keyword id="KW-1133">Transmembrane helix</keyword>
<gene>
    <name evidence="1" type="primary">ctaB</name>
    <name type="ordered locus">lwe2077</name>
</gene>
<accession>A0AKG3</accession>
<feature type="chain" id="PRO_0000327074" description="Protoheme IX farnesyltransferase">
    <location>
        <begin position="1"/>
        <end position="301"/>
    </location>
</feature>
<feature type="transmembrane region" description="Helical" evidence="1">
    <location>
        <begin position="20"/>
        <end position="42"/>
    </location>
</feature>
<feature type="transmembrane region" description="Helical" evidence="1">
    <location>
        <begin position="55"/>
        <end position="75"/>
    </location>
</feature>
<feature type="transmembrane region" description="Helical" evidence="1">
    <location>
        <begin position="105"/>
        <end position="125"/>
    </location>
</feature>
<feature type="transmembrane region" description="Helical" evidence="1">
    <location>
        <begin position="126"/>
        <end position="146"/>
    </location>
</feature>
<feature type="transmembrane region" description="Helical" evidence="1">
    <location>
        <begin position="150"/>
        <end position="172"/>
    </location>
</feature>
<feature type="transmembrane region" description="Helical" evidence="1">
    <location>
        <begin position="176"/>
        <end position="198"/>
    </location>
</feature>
<feature type="transmembrane region" description="Helical" evidence="1">
    <location>
        <begin position="227"/>
        <end position="247"/>
    </location>
</feature>
<feature type="transmembrane region" description="Helical" evidence="1">
    <location>
        <begin position="249"/>
        <end position="269"/>
    </location>
</feature>
<feature type="transmembrane region" description="Helical" evidence="1">
    <location>
        <begin position="280"/>
        <end position="300"/>
    </location>
</feature>
<comment type="function">
    <text evidence="1">Converts heme B (protoheme IX) to heme O by substitution of the vinyl group on carbon 2 of heme B porphyrin ring with a hydroxyethyl farnesyl side group.</text>
</comment>
<comment type="catalytic activity">
    <reaction evidence="1">
        <text>heme b + (2E,6E)-farnesyl diphosphate + H2O = Fe(II)-heme o + diphosphate</text>
        <dbReference type="Rhea" id="RHEA:28070"/>
        <dbReference type="ChEBI" id="CHEBI:15377"/>
        <dbReference type="ChEBI" id="CHEBI:33019"/>
        <dbReference type="ChEBI" id="CHEBI:60344"/>
        <dbReference type="ChEBI" id="CHEBI:60530"/>
        <dbReference type="ChEBI" id="CHEBI:175763"/>
        <dbReference type="EC" id="2.5.1.141"/>
    </reaction>
</comment>
<comment type="pathway">
    <text evidence="1">Porphyrin-containing compound metabolism; heme O biosynthesis; heme O from protoheme: step 1/1.</text>
</comment>
<comment type="subunit">
    <text evidence="1">Interacts with CtaA.</text>
</comment>
<comment type="subcellular location">
    <subcellularLocation>
        <location evidence="1">Cell membrane</location>
        <topology evidence="1">Multi-pass membrane protein</topology>
    </subcellularLocation>
</comment>
<comment type="miscellaneous">
    <text evidence="1">Carbon 2 of the heme B porphyrin ring is defined according to the Fischer nomenclature.</text>
</comment>
<comment type="similarity">
    <text evidence="1">Belongs to the UbiA prenyltransferase family. Protoheme IX farnesyltransferase subfamily.</text>
</comment>
<protein>
    <recommendedName>
        <fullName evidence="1">Protoheme IX farnesyltransferase</fullName>
        <ecNumber evidence="1">2.5.1.141</ecNumber>
    </recommendedName>
    <alternativeName>
        <fullName evidence="1">Heme B farnesyltransferase</fullName>
    </alternativeName>
    <alternativeName>
        <fullName evidence="1">Heme O synthase</fullName>
    </alternativeName>
</protein>
<evidence type="ECO:0000255" key="1">
    <source>
        <dbReference type="HAMAP-Rule" id="MF_00154"/>
    </source>
</evidence>
<sequence>MNQIEKTGELSASRFTVRDFTELVKIGIVNSNTITAFTGMWLAFQLNGISFIQNVDVIFFTIVGSALIVAASGAFNNVIDRDIDGIMERTKNRPTMTGKISGKRALMVALVLGVVGTIMLFMTTWQAGVLGVIGVFLYVVVYSLYAKRKLVSNTVIGSFSGAVPPLIGWFAVEPSFSMVPIMLFLVMFCWQPPHFYAIAIKRKDEYAAAGIPMLPVVKGIERTKKSMFFWVILLTILPFFMFDLGIVYVILATLLNIGWLALSVYGFKMADSIKWAKWMFIYSLNYMTILFVAMVVISIFL</sequence>
<dbReference type="EC" id="2.5.1.141" evidence="1"/>
<dbReference type="EMBL" id="AM263198">
    <property type="protein sequence ID" value="CAK21495.1"/>
    <property type="molecule type" value="Genomic_DNA"/>
</dbReference>
<dbReference type="RefSeq" id="WP_011702836.1">
    <property type="nucleotide sequence ID" value="NC_008555.1"/>
</dbReference>
<dbReference type="SMR" id="A0AKG3"/>
<dbReference type="STRING" id="386043.lwe2077"/>
<dbReference type="GeneID" id="61189977"/>
<dbReference type="KEGG" id="lwe:lwe2077"/>
<dbReference type="eggNOG" id="COG0109">
    <property type="taxonomic scope" value="Bacteria"/>
</dbReference>
<dbReference type="HOGENOM" id="CLU_029631_0_0_9"/>
<dbReference type="OrthoDB" id="9814417at2"/>
<dbReference type="UniPathway" id="UPA00834">
    <property type="reaction ID" value="UER00712"/>
</dbReference>
<dbReference type="Proteomes" id="UP000000779">
    <property type="component" value="Chromosome"/>
</dbReference>
<dbReference type="GO" id="GO:0005886">
    <property type="term" value="C:plasma membrane"/>
    <property type="evidence" value="ECO:0007669"/>
    <property type="project" value="UniProtKB-SubCell"/>
</dbReference>
<dbReference type="GO" id="GO:0008495">
    <property type="term" value="F:protoheme IX farnesyltransferase activity"/>
    <property type="evidence" value="ECO:0007669"/>
    <property type="project" value="UniProtKB-UniRule"/>
</dbReference>
<dbReference type="GO" id="GO:0048034">
    <property type="term" value="P:heme O biosynthetic process"/>
    <property type="evidence" value="ECO:0007669"/>
    <property type="project" value="UniProtKB-UniRule"/>
</dbReference>
<dbReference type="CDD" id="cd13957">
    <property type="entry name" value="PT_UbiA_Cox10"/>
    <property type="match status" value="1"/>
</dbReference>
<dbReference type="FunFam" id="1.10.357.140:FF:000001">
    <property type="entry name" value="Protoheme IX farnesyltransferase"/>
    <property type="match status" value="1"/>
</dbReference>
<dbReference type="Gene3D" id="1.10.357.140">
    <property type="entry name" value="UbiA prenyltransferase"/>
    <property type="match status" value="1"/>
</dbReference>
<dbReference type="HAMAP" id="MF_00154">
    <property type="entry name" value="CyoE_CtaB"/>
    <property type="match status" value="1"/>
</dbReference>
<dbReference type="InterPro" id="IPR006369">
    <property type="entry name" value="Protohaem_IX_farnesylTrfase"/>
</dbReference>
<dbReference type="InterPro" id="IPR000537">
    <property type="entry name" value="UbiA_prenyltransferase"/>
</dbReference>
<dbReference type="InterPro" id="IPR030470">
    <property type="entry name" value="UbiA_prenylTrfase_CS"/>
</dbReference>
<dbReference type="InterPro" id="IPR044878">
    <property type="entry name" value="UbiA_sf"/>
</dbReference>
<dbReference type="NCBIfam" id="TIGR01473">
    <property type="entry name" value="cyoE_ctaB"/>
    <property type="match status" value="1"/>
</dbReference>
<dbReference type="PANTHER" id="PTHR43448">
    <property type="entry name" value="PROTOHEME IX FARNESYLTRANSFERASE, MITOCHONDRIAL"/>
    <property type="match status" value="1"/>
</dbReference>
<dbReference type="PANTHER" id="PTHR43448:SF2">
    <property type="entry name" value="PROTOHEME IX FARNESYLTRANSFERASE, MITOCHONDRIAL"/>
    <property type="match status" value="1"/>
</dbReference>
<dbReference type="Pfam" id="PF01040">
    <property type="entry name" value="UbiA"/>
    <property type="match status" value="1"/>
</dbReference>
<dbReference type="PROSITE" id="PS00943">
    <property type="entry name" value="UBIA"/>
    <property type="match status" value="1"/>
</dbReference>
<organism>
    <name type="scientific">Listeria welshimeri serovar 6b (strain ATCC 35897 / DSM 20650 / CCUG 15529 / CIP 8149 / NCTC 11857 / SLCC 5334 / V8)</name>
    <dbReference type="NCBI Taxonomy" id="386043"/>
    <lineage>
        <taxon>Bacteria</taxon>
        <taxon>Bacillati</taxon>
        <taxon>Bacillota</taxon>
        <taxon>Bacilli</taxon>
        <taxon>Bacillales</taxon>
        <taxon>Listeriaceae</taxon>
        <taxon>Listeria</taxon>
    </lineage>
</organism>
<name>COXX_LISW6</name>
<reference key="1">
    <citation type="journal article" date="2006" name="J. Bacteriol.">
        <title>Whole-genome sequence of Listeria welshimeri reveals common steps in genome reduction with Listeria innocua as compared to Listeria monocytogenes.</title>
        <authorList>
            <person name="Hain T."/>
            <person name="Steinweg C."/>
            <person name="Kuenne C.T."/>
            <person name="Billion A."/>
            <person name="Ghai R."/>
            <person name="Chatterjee S.S."/>
            <person name="Domann E."/>
            <person name="Kaerst U."/>
            <person name="Goesmann A."/>
            <person name="Bekel T."/>
            <person name="Bartels D."/>
            <person name="Kaiser O."/>
            <person name="Meyer F."/>
            <person name="Puehler A."/>
            <person name="Weisshaar B."/>
            <person name="Wehland J."/>
            <person name="Liang C."/>
            <person name="Dandekar T."/>
            <person name="Lampidis R."/>
            <person name="Kreft J."/>
            <person name="Goebel W."/>
            <person name="Chakraborty T."/>
        </authorList>
    </citation>
    <scope>NUCLEOTIDE SEQUENCE [LARGE SCALE GENOMIC DNA]</scope>
    <source>
        <strain>ATCC 35897 / DSM 20650 / CCUG 15529 / CIP 8149 / NCTC 11857 / SLCC 5334 / V8</strain>
    </source>
</reference>
<proteinExistence type="inferred from homology"/>